<keyword id="KW-1003">Cell membrane</keyword>
<keyword id="KW-1015">Disulfide bond</keyword>
<keyword id="KW-0297">G-protein coupled receptor</keyword>
<keyword id="KW-0325">Glycoprotein</keyword>
<keyword id="KW-0472">Membrane</keyword>
<keyword id="KW-0675">Receptor</keyword>
<keyword id="KW-1185">Reference proteome</keyword>
<keyword id="KW-0807">Transducer</keyword>
<keyword id="KW-0812">Transmembrane</keyword>
<keyword id="KW-1133">Transmembrane helix</keyword>
<feature type="chain" id="PRO_0000070104" description="Relaxin-3 receptor 1">
    <location>
        <begin position="1"/>
        <end position="469"/>
    </location>
</feature>
<feature type="topological domain" description="Extracellular" evidence="1">
    <location>
        <begin position="1"/>
        <end position="81"/>
    </location>
</feature>
<feature type="transmembrane region" description="Helical; Name=1" evidence="1">
    <location>
        <begin position="82"/>
        <end position="102"/>
    </location>
</feature>
<feature type="topological domain" description="Cytoplasmic" evidence="1">
    <location>
        <begin position="103"/>
        <end position="119"/>
    </location>
</feature>
<feature type="transmembrane region" description="Helical; Name=2" evidence="1">
    <location>
        <begin position="120"/>
        <end position="140"/>
    </location>
</feature>
<feature type="topological domain" description="Extracellular" evidence="1">
    <location>
        <begin position="141"/>
        <end position="156"/>
    </location>
</feature>
<feature type="transmembrane region" description="Helical; Name=3" evidence="1">
    <location>
        <begin position="157"/>
        <end position="177"/>
    </location>
</feature>
<feature type="topological domain" description="Cytoplasmic" evidence="1">
    <location>
        <begin position="178"/>
        <end position="215"/>
    </location>
</feature>
<feature type="transmembrane region" description="Helical; Name=4" evidence="1">
    <location>
        <begin position="216"/>
        <end position="236"/>
    </location>
</feature>
<feature type="topological domain" description="Extracellular" evidence="1">
    <location>
        <begin position="237"/>
        <end position="270"/>
    </location>
</feature>
<feature type="transmembrane region" description="Helical; Name=5" evidence="1">
    <location>
        <begin position="271"/>
        <end position="291"/>
    </location>
</feature>
<feature type="topological domain" description="Cytoplasmic" evidence="1">
    <location>
        <begin position="292"/>
        <end position="329"/>
    </location>
</feature>
<feature type="transmembrane region" description="Helical; Name=6" evidence="1">
    <location>
        <begin position="330"/>
        <end position="350"/>
    </location>
</feature>
<feature type="topological domain" description="Extracellular" evidence="1">
    <location>
        <begin position="351"/>
        <end position="356"/>
    </location>
</feature>
<feature type="transmembrane region" description="Helical; Name=7" evidence="1">
    <location>
        <begin position="357"/>
        <end position="377"/>
    </location>
</feature>
<feature type="topological domain" description="Cytoplasmic" evidence="1">
    <location>
        <begin position="378"/>
        <end position="469"/>
    </location>
</feature>
<feature type="glycosylation site" description="N-linked (GlcNAc...) asparagine" evidence="1">
    <location>
        <position position="36"/>
    </location>
</feature>
<feature type="glycosylation site" description="N-linked (GlcNAc...) asparagine" evidence="1">
    <location>
        <position position="40"/>
    </location>
</feature>
<feature type="disulfide bond" evidence="2">
    <location>
        <begin position="155"/>
        <end position="247"/>
    </location>
</feature>
<evidence type="ECO:0000255" key="1"/>
<evidence type="ECO:0000255" key="2">
    <source>
        <dbReference type="PROSITE-ProRule" id="PRU00521"/>
    </source>
</evidence>
<evidence type="ECO:0000269" key="3">
    <source>
    </source>
</evidence>
<accession>Q9NSD7</accession>
<accession>Q14DA5</accession>
<organism>
    <name type="scientific">Homo sapiens</name>
    <name type="common">Human</name>
    <dbReference type="NCBI Taxonomy" id="9606"/>
    <lineage>
        <taxon>Eukaryota</taxon>
        <taxon>Metazoa</taxon>
        <taxon>Chordata</taxon>
        <taxon>Craniata</taxon>
        <taxon>Vertebrata</taxon>
        <taxon>Euteleostomi</taxon>
        <taxon>Mammalia</taxon>
        <taxon>Eutheria</taxon>
        <taxon>Euarchontoglires</taxon>
        <taxon>Primates</taxon>
        <taxon>Haplorrhini</taxon>
        <taxon>Catarrhini</taxon>
        <taxon>Hominidae</taxon>
        <taxon>Homo</taxon>
    </lineage>
</organism>
<gene>
    <name type="primary">RXFP3</name>
    <name type="synonym">GPCR135</name>
    <name type="synonym">RLN3R1</name>
    <name type="synonym">SALPR</name>
</gene>
<protein>
    <recommendedName>
        <fullName>Relaxin-3 receptor 1</fullName>
        <shortName>RLN3 receptor 1</shortName>
    </recommendedName>
    <alternativeName>
        <fullName>G protein-coupled receptor SALPR</fullName>
    </alternativeName>
    <alternativeName>
        <fullName>G-protein coupled receptor GPCR135</fullName>
    </alternativeName>
    <alternativeName>
        <fullName>Relaxin family peptide receptor 3</fullName>
    </alternativeName>
    <alternativeName>
        <fullName>Somatostatin- and angiotensin-like peptide receptor</fullName>
    </alternativeName>
</protein>
<dbReference type="EMBL" id="D88437">
    <property type="protein sequence ID" value="BAA93001.1"/>
    <property type="molecule type" value="mRNA"/>
</dbReference>
<dbReference type="EMBL" id="AY236541">
    <property type="protein sequence ID" value="AAO92063.1"/>
    <property type="molecule type" value="Genomic_DNA"/>
</dbReference>
<dbReference type="EMBL" id="AY394501">
    <property type="protein sequence ID" value="AAQ92315.1"/>
    <property type="molecule type" value="mRNA"/>
</dbReference>
<dbReference type="EMBL" id="BC113438">
    <property type="protein sequence ID" value="AAI13439.1"/>
    <property type="molecule type" value="mRNA"/>
</dbReference>
<dbReference type="EMBL" id="BC113440">
    <property type="protein sequence ID" value="AAI13441.1"/>
    <property type="molecule type" value="mRNA"/>
</dbReference>
<dbReference type="CCDS" id="CCDS3900.1"/>
<dbReference type="RefSeq" id="NP_057652.1">
    <property type="nucleotide sequence ID" value="NM_016568.3"/>
</dbReference>
<dbReference type="SMR" id="Q9NSD7"/>
<dbReference type="BioGRID" id="119440">
    <property type="interactions" value="10"/>
</dbReference>
<dbReference type="FunCoup" id="Q9NSD7">
    <property type="interactions" value="1150"/>
</dbReference>
<dbReference type="IntAct" id="Q9NSD7">
    <property type="interactions" value="8"/>
</dbReference>
<dbReference type="MINT" id="Q9NSD7"/>
<dbReference type="STRING" id="9606.ENSP00000328708"/>
<dbReference type="BindingDB" id="Q9NSD7"/>
<dbReference type="ChEMBL" id="CHEMBL1628472"/>
<dbReference type="GuidetoPHARMACOLOGY" id="353"/>
<dbReference type="TCDB" id="9.A.14.13.21">
    <property type="family name" value="the g-protein-coupled receptor (gpcr) family"/>
</dbReference>
<dbReference type="GlyCosmos" id="Q9NSD7">
    <property type="glycosylation" value="2 sites, No reported glycans"/>
</dbReference>
<dbReference type="GlyGen" id="Q9NSD7">
    <property type="glycosylation" value="2 sites"/>
</dbReference>
<dbReference type="iPTMnet" id="Q9NSD7"/>
<dbReference type="PhosphoSitePlus" id="Q9NSD7"/>
<dbReference type="BioMuta" id="RXFP3"/>
<dbReference type="DMDM" id="20455271"/>
<dbReference type="jPOST" id="Q9NSD7"/>
<dbReference type="MassIVE" id="Q9NSD7"/>
<dbReference type="PaxDb" id="9606-ENSP00000328708"/>
<dbReference type="ProteomicsDB" id="82537"/>
<dbReference type="Antibodypedia" id="9933">
    <property type="antibodies" value="266 antibodies from 30 providers"/>
</dbReference>
<dbReference type="DNASU" id="51289"/>
<dbReference type="Ensembl" id="ENST00000330120.5">
    <property type="protein sequence ID" value="ENSP00000328708.3"/>
    <property type="gene ID" value="ENSG00000182631.7"/>
</dbReference>
<dbReference type="Ensembl" id="ENST00000616205.2">
    <property type="protein sequence ID" value="ENSP00000480733.1"/>
    <property type="gene ID" value="ENSG00000277069.2"/>
</dbReference>
<dbReference type="GeneID" id="51289"/>
<dbReference type="KEGG" id="hsa:51289"/>
<dbReference type="MANE-Select" id="ENST00000330120.5">
    <property type="protein sequence ID" value="ENSP00000328708.3"/>
    <property type="RefSeq nucleotide sequence ID" value="NM_016568.3"/>
    <property type="RefSeq protein sequence ID" value="NP_057652.1"/>
</dbReference>
<dbReference type="UCSC" id="uc003jic.3">
    <property type="organism name" value="human"/>
</dbReference>
<dbReference type="AGR" id="HGNC:24883"/>
<dbReference type="CTD" id="51289"/>
<dbReference type="DisGeNET" id="51289"/>
<dbReference type="GeneCards" id="RXFP3"/>
<dbReference type="HGNC" id="HGNC:24883">
    <property type="gene designation" value="RXFP3"/>
</dbReference>
<dbReference type="HPA" id="ENSG00000182631">
    <property type="expression patterns" value="Not detected"/>
</dbReference>
<dbReference type="MIM" id="609445">
    <property type="type" value="gene"/>
</dbReference>
<dbReference type="neXtProt" id="NX_Q9NSD7"/>
<dbReference type="OpenTargets" id="ENSG00000182631"/>
<dbReference type="PharmGKB" id="PA134868535"/>
<dbReference type="VEuPathDB" id="HostDB:ENSG00000182631"/>
<dbReference type="eggNOG" id="KOG3656">
    <property type="taxonomic scope" value="Eukaryota"/>
</dbReference>
<dbReference type="GeneTree" id="ENSGT01030000234518"/>
<dbReference type="HOGENOM" id="CLU_009579_8_1_1"/>
<dbReference type="InParanoid" id="Q9NSD7"/>
<dbReference type="OMA" id="CVLIWAS"/>
<dbReference type="OrthoDB" id="9936726at2759"/>
<dbReference type="PAN-GO" id="Q9NSD7">
    <property type="GO annotations" value="3 GO annotations based on evolutionary models"/>
</dbReference>
<dbReference type="PhylomeDB" id="Q9NSD7"/>
<dbReference type="TreeFam" id="TF330024"/>
<dbReference type="PathwayCommons" id="Q9NSD7"/>
<dbReference type="Reactome" id="R-HSA-418594">
    <property type="pathway name" value="G alpha (i) signalling events"/>
</dbReference>
<dbReference type="Reactome" id="R-HSA-444821">
    <property type="pathway name" value="Relaxin receptors"/>
</dbReference>
<dbReference type="SignaLink" id="Q9NSD7"/>
<dbReference type="BioGRID-ORCS" id="51289">
    <property type="hits" value="10 hits in 1138 CRISPR screens"/>
</dbReference>
<dbReference type="GeneWiki" id="Relaxin/insulin-like_family_peptide_receptor_3"/>
<dbReference type="GenomeRNAi" id="51289"/>
<dbReference type="Pharos" id="Q9NSD7">
    <property type="development level" value="Tchem"/>
</dbReference>
<dbReference type="PRO" id="PR:Q9NSD7"/>
<dbReference type="Proteomes" id="UP000005640">
    <property type="component" value="Chromosome 5"/>
</dbReference>
<dbReference type="RNAct" id="Q9NSD7">
    <property type="molecule type" value="protein"/>
</dbReference>
<dbReference type="Bgee" id="ENSG00000182631">
    <property type="expression patterns" value="Expressed in adrenal tissue and 11 other cell types or tissues"/>
</dbReference>
<dbReference type="GO" id="GO:0005886">
    <property type="term" value="C:plasma membrane"/>
    <property type="evidence" value="ECO:0000318"/>
    <property type="project" value="GO_Central"/>
</dbReference>
<dbReference type="GO" id="GO:0008528">
    <property type="term" value="F:G protein-coupled peptide receptor activity"/>
    <property type="evidence" value="ECO:0000318"/>
    <property type="project" value="GO_Central"/>
</dbReference>
<dbReference type="GO" id="GO:0004930">
    <property type="term" value="F:G protein-coupled receptor activity"/>
    <property type="evidence" value="ECO:0000304"/>
    <property type="project" value="ProtInc"/>
</dbReference>
<dbReference type="GO" id="GO:0007186">
    <property type="term" value="P:G protein-coupled receptor signaling pathway"/>
    <property type="evidence" value="ECO:0000304"/>
    <property type="project" value="ProtInc"/>
</dbReference>
<dbReference type="GO" id="GO:0007218">
    <property type="term" value="P:neuropeptide signaling pathway"/>
    <property type="evidence" value="ECO:0000318"/>
    <property type="project" value="GO_Central"/>
</dbReference>
<dbReference type="GO" id="GO:0032467">
    <property type="term" value="P:positive regulation of cytokinesis"/>
    <property type="evidence" value="ECO:0000315"/>
    <property type="project" value="UniProtKB"/>
</dbReference>
<dbReference type="CDD" id="cd15926">
    <property type="entry name" value="7tmA_RNL3R1"/>
    <property type="match status" value="1"/>
</dbReference>
<dbReference type="FunFam" id="1.20.1070.10:FF:000216">
    <property type="entry name" value="Relaxin family peptide receptor 3"/>
    <property type="match status" value="1"/>
</dbReference>
<dbReference type="Gene3D" id="1.20.1070.10">
    <property type="entry name" value="Rhodopsin 7-helix transmembrane proteins"/>
    <property type="match status" value="1"/>
</dbReference>
<dbReference type="InterPro" id="IPR050119">
    <property type="entry name" value="CCR1-9-like"/>
</dbReference>
<dbReference type="InterPro" id="IPR000276">
    <property type="entry name" value="GPCR_Rhodpsn"/>
</dbReference>
<dbReference type="InterPro" id="IPR017452">
    <property type="entry name" value="GPCR_Rhodpsn_7TM"/>
</dbReference>
<dbReference type="PANTHER" id="PTHR10489">
    <property type="entry name" value="CELL ADHESION MOLECULE"/>
    <property type="match status" value="1"/>
</dbReference>
<dbReference type="PANTHER" id="PTHR10489:SF951">
    <property type="entry name" value="RELAXIN FAMILY PEPTIDE_INSL5 RECEPTOR 4"/>
    <property type="match status" value="1"/>
</dbReference>
<dbReference type="Pfam" id="PF00001">
    <property type="entry name" value="7tm_1"/>
    <property type="match status" value="2"/>
</dbReference>
<dbReference type="PRINTS" id="PR00526">
    <property type="entry name" value="FMETLEUPHER"/>
</dbReference>
<dbReference type="PRINTS" id="PR00237">
    <property type="entry name" value="GPCRRHODOPSN"/>
</dbReference>
<dbReference type="SUPFAM" id="SSF81321">
    <property type="entry name" value="Family A G protein-coupled receptor-like"/>
    <property type="match status" value="1"/>
</dbReference>
<dbReference type="PROSITE" id="PS50262">
    <property type="entry name" value="G_PROTEIN_RECEP_F1_2"/>
    <property type="match status" value="1"/>
</dbReference>
<sequence length="469" mass="51124">MQMADAATIATMNKAAGGDKLAELFSLVPDLLEAANTSGNASLQLPDLWWELGLELPDGAPPGHPPGSGGAESADTEARVRILISVVYWVVCALGLAGNLLVLYLMKSMQGWRKSSINLFVTNLALTDFQFVLTLPFWAVENALDFKWPFGKAMCKIVSMVTSMNMYASVFFLTAMSVTRYHSVASALKSHRTRGHGRGDCCGRSLGDSCCFSAKALCVWIWALAALASLPSAIFSTTVKVMGEELCLVRFPDKLLGRDRQFWLGLYHSQKVLLGFVLPLGIIILCYLLLVRFIADRRAAGTKGGAAVAGGRPTGASARRLSKVTKSVTIVVLSFFLCWLPNQALTTWSILIKFNAVPFSQEYFLCQVYAFPVSVCLAHSNSCLNPVLYCLVRREFRKALKSLLWRIASPSITSMRPFTATTKPEHEDQGLQAPAPPHAAAEPDLLYYPPGVVVYSGGRYDLLPSSSAY</sequence>
<proteinExistence type="evidence at protein level"/>
<reference key="1">
    <citation type="journal article" date="2000" name="Gene">
        <title>The novel G-protein coupled receptor SALPR shares sequence similarity with somatostatin and angiotensin receptors.</title>
        <authorList>
            <person name="Matsumoto M."/>
            <person name="Kamohara M."/>
            <person name="Sugimoto T."/>
            <person name="Hidaka K."/>
            <person name="Takasaki J."/>
            <person name="Saito T."/>
            <person name="Okada M."/>
            <person name="Yamaguchi T."/>
            <person name="Furuichi K."/>
        </authorList>
    </citation>
    <scope>NUCLEOTIDE SEQUENCE [MRNA]</scope>
    <source>
        <tissue>Brain cortex</tissue>
    </source>
</reference>
<reference key="2">
    <citation type="submission" date="2003-02" db="EMBL/GenBank/DDBJ databases">
        <title>cDNA clones of human proteins involved in signal transduction sequenced by the Guthrie cDNA resource center (www.cdna.org).</title>
        <authorList>
            <person name="Kopatz S.A."/>
            <person name="Aronstam R.S."/>
            <person name="Sharma S.V."/>
        </authorList>
    </citation>
    <scope>NUCLEOTIDE SEQUENCE [LARGE SCALE MRNA]</scope>
</reference>
<reference key="3">
    <citation type="journal article" date="2003" name="J. Biol. Chem.">
        <title>Identification of relaxin-3/INSL7 as an endogenous ligand for the orphan G-protein coupled receptor GPCR135.</title>
        <authorList>
            <person name="Liu C."/>
            <person name="Eriste E."/>
            <person name="Sutton S."/>
            <person name="Chen J."/>
            <person name="Roland B."/>
            <person name="Kuei C."/>
            <person name="Farmer N."/>
            <person name="Joernvall H."/>
            <person name="Sillard R."/>
            <person name="Lovenberg T.W."/>
        </authorList>
    </citation>
    <scope>NUCLEOTIDE SEQUENCE [MRNA]</scope>
    <scope>FUNCTION AS A RECEPTOR FOR RLN3</scope>
</reference>
<reference key="4">
    <citation type="journal article" date="2004" name="Genome Res.">
        <title>The status, quality, and expansion of the NIH full-length cDNA project: the Mammalian Gene Collection (MGC).</title>
        <authorList>
            <consortium name="The MGC Project Team"/>
        </authorList>
    </citation>
    <scope>NUCLEOTIDE SEQUENCE [LARGE SCALE MRNA]</scope>
</reference>
<name>RL3R1_HUMAN</name>
<comment type="function">
    <text evidence="3">Receptor for RNL3/relaxin-3. Binding of the ligand inhibit cAMP accumulation.</text>
</comment>
<comment type="subcellular location">
    <subcellularLocation>
        <location>Cell membrane</location>
        <topology>Multi-pass membrane protein</topology>
    </subcellularLocation>
</comment>
<comment type="tissue specificity">
    <text>Expressed predominantly in brain regions. Highest expression in substantia nigra and pituitary, followed by hippocampus, spinal cord, amygdala, caudate nucleus and corpus callosum, quite low level in cerebellum. In peripheral tissues, relatively high levels in adrenal glands, low levels in pancreas, salivary gland, placenta, mammary gland and testis.</text>
</comment>
<comment type="similarity">
    <text evidence="2">Belongs to the G-protein coupled receptor 1 family.</text>
</comment>